<reference key="1">
    <citation type="journal article" date="2002" name="DNA Res.">
        <title>Complete genome structure of the thermophilic cyanobacterium Thermosynechococcus elongatus BP-1.</title>
        <authorList>
            <person name="Nakamura Y."/>
            <person name="Kaneko T."/>
            <person name="Sato S."/>
            <person name="Ikeuchi M."/>
            <person name="Katoh H."/>
            <person name="Sasamoto S."/>
            <person name="Watanabe A."/>
            <person name="Iriguchi M."/>
            <person name="Kawashima K."/>
            <person name="Kimura T."/>
            <person name="Kishida Y."/>
            <person name="Kiyokawa C."/>
            <person name="Kohara M."/>
            <person name="Matsumoto M."/>
            <person name="Matsuno A."/>
            <person name="Nakazaki N."/>
            <person name="Shimpo S."/>
            <person name="Sugimoto M."/>
            <person name="Takeuchi C."/>
            <person name="Yamada M."/>
            <person name="Tabata S."/>
        </authorList>
    </citation>
    <scope>NUCLEOTIDE SEQUENCE [LARGE SCALE GENOMIC DNA]</scope>
    <source>
        <strain>NIES-2133 / IAM M-273 / BP-1</strain>
    </source>
</reference>
<proteinExistence type="inferred from homology"/>
<name>HIS7_THEVB</name>
<accession>Q8DMI3</accession>
<dbReference type="EC" id="4.2.1.19" evidence="1"/>
<dbReference type="EMBL" id="BA000039">
    <property type="protein sequence ID" value="BAC07686.1"/>
    <property type="molecule type" value="Genomic_DNA"/>
</dbReference>
<dbReference type="RefSeq" id="NP_680924.1">
    <property type="nucleotide sequence ID" value="NC_004113.1"/>
</dbReference>
<dbReference type="RefSeq" id="WP_011055988.1">
    <property type="nucleotide sequence ID" value="NC_004113.1"/>
</dbReference>
<dbReference type="SMR" id="Q8DMI3"/>
<dbReference type="STRING" id="197221.gene:10746713"/>
<dbReference type="EnsemblBacteria" id="BAC07686">
    <property type="protein sequence ID" value="BAC07686"/>
    <property type="gene ID" value="BAC07686"/>
</dbReference>
<dbReference type="KEGG" id="tel:tll0133"/>
<dbReference type="PATRIC" id="fig|197221.4.peg.137"/>
<dbReference type="eggNOG" id="COG0131">
    <property type="taxonomic scope" value="Bacteria"/>
</dbReference>
<dbReference type="UniPathway" id="UPA00031">
    <property type="reaction ID" value="UER00011"/>
</dbReference>
<dbReference type="Proteomes" id="UP000000440">
    <property type="component" value="Chromosome"/>
</dbReference>
<dbReference type="GO" id="GO:0005737">
    <property type="term" value="C:cytoplasm"/>
    <property type="evidence" value="ECO:0007669"/>
    <property type="project" value="UniProtKB-SubCell"/>
</dbReference>
<dbReference type="GO" id="GO:0004424">
    <property type="term" value="F:imidazoleglycerol-phosphate dehydratase activity"/>
    <property type="evidence" value="ECO:0007669"/>
    <property type="project" value="UniProtKB-UniRule"/>
</dbReference>
<dbReference type="GO" id="GO:0000105">
    <property type="term" value="P:L-histidine biosynthetic process"/>
    <property type="evidence" value="ECO:0007669"/>
    <property type="project" value="UniProtKB-UniRule"/>
</dbReference>
<dbReference type="CDD" id="cd07914">
    <property type="entry name" value="IGPD"/>
    <property type="match status" value="1"/>
</dbReference>
<dbReference type="FunFam" id="3.30.230.40:FF:000002">
    <property type="entry name" value="Imidazoleglycerol-phosphate dehydratase"/>
    <property type="match status" value="1"/>
</dbReference>
<dbReference type="FunFam" id="3.30.230.40:FF:000003">
    <property type="entry name" value="Imidazoleglycerol-phosphate dehydratase HisB"/>
    <property type="match status" value="1"/>
</dbReference>
<dbReference type="Gene3D" id="3.30.230.40">
    <property type="entry name" value="Imidazole glycerol phosphate dehydratase, domain 1"/>
    <property type="match status" value="2"/>
</dbReference>
<dbReference type="HAMAP" id="MF_00076">
    <property type="entry name" value="HisB"/>
    <property type="match status" value="1"/>
</dbReference>
<dbReference type="InterPro" id="IPR038494">
    <property type="entry name" value="IGPD_sf"/>
</dbReference>
<dbReference type="InterPro" id="IPR000807">
    <property type="entry name" value="ImidazoleglycerolP_deHydtase"/>
</dbReference>
<dbReference type="InterPro" id="IPR020565">
    <property type="entry name" value="ImidazoleglycerP_deHydtase_CS"/>
</dbReference>
<dbReference type="InterPro" id="IPR020568">
    <property type="entry name" value="Ribosomal_Su5_D2-typ_SF"/>
</dbReference>
<dbReference type="NCBIfam" id="NF002108">
    <property type="entry name" value="PRK00951.1-3"/>
    <property type="match status" value="1"/>
</dbReference>
<dbReference type="NCBIfam" id="NF002111">
    <property type="entry name" value="PRK00951.2-1"/>
    <property type="match status" value="1"/>
</dbReference>
<dbReference type="NCBIfam" id="NF002114">
    <property type="entry name" value="PRK00951.2-4"/>
    <property type="match status" value="1"/>
</dbReference>
<dbReference type="PANTHER" id="PTHR23133:SF2">
    <property type="entry name" value="IMIDAZOLEGLYCEROL-PHOSPHATE DEHYDRATASE"/>
    <property type="match status" value="1"/>
</dbReference>
<dbReference type="PANTHER" id="PTHR23133">
    <property type="entry name" value="IMIDAZOLEGLYCEROL-PHOSPHATE DEHYDRATASE HIS7"/>
    <property type="match status" value="1"/>
</dbReference>
<dbReference type="Pfam" id="PF00475">
    <property type="entry name" value="IGPD"/>
    <property type="match status" value="1"/>
</dbReference>
<dbReference type="SUPFAM" id="SSF54211">
    <property type="entry name" value="Ribosomal protein S5 domain 2-like"/>
    <property type="match status" value="2"/>
</dbReference>
<dbReference type="PROSITE" id="PS00954">
    <property type="entry name" value="IGP_DEHYDRATASE_1"/>
    <property type="match status" value="1"/>
</dbReference>
<dbReference type="PROSITE" id="PS00955">
    <property type="entry name" value="IGP_DEHYDRATASE_2"/>
    <property type="match status" value="1"/>
</dbReference>
<organism>
    <name type="scientific">Thermosynechococcus vestitus (strain NIES-2133 / IAM M-273 / BP-1)</name>
    <dbReference type="NCBI Taxonomy" id="197221"/>
    <lineage>
        <taxon>Bacteria</taxon>
        <taxon>Bacillati</taxon>
        <taxon>Cyanobacteriota</taxon>
        <taxon>Cyanophyceae</taxon>
        <taxon>Acaryochloridales</taxon>
        <taxon>Thermosynechococcaceae</taxon>
        <taxon>Thermosynechococcus</taxon>
    </lineage>
</organism>
<keyword id="KW-0028">Amino-acid biosynthesis</keyword>
<keyword id="KW-0963">Cytoplasm</keyword>
<keyword id="KW-0368">Histidine biosynthesis</keyword>
<keyword id="KW-0456">Lyase</keyword>
<keyword id="KW-1185">Reference proteome</keyword>
<gene>
    <name evidence="1" type="primary">hisB</name>
    <name type="ordered locus">tll0133</name>
</gene>
<protein>
    <recommendedName>
        <fullName evidence="1">Imidazoleglycerol-phosphate dehydratase</fullName>
        <shortName evidence="1">IGPD</shortName>
        <ecNumber evidence="1">4.2.1.19</ecNumber>
    </recommendedName>
</protein>
<feature type="chain" id="PRO_0000158177" description="Imidazoleglycerol-phosphate dehydratase">
    <location>
        <begin position="1"/>
        <end position="210"/>
    </location>
</feature>
<feature type="region of interest" description="Disordered" evidence="2">
    <location>
        <begin position="1"/>
        <end position="23"/>
    </location>
</feature>
<comment type="catalytic activity">
    <reaction evidence="1">
        <text>D-erythro-1-(imidazol-4-yl)glycerol 3-phosphate = 3-(imidazol-4-yl)-2-oxopropyl phosphate + H2O</text>
        <dbReference type="Rhea" id="RHEA:11040"/>
        <dbReference type="ChEBI" id="CHEBI:15377"/>
        <dbReference type="ChEBI" id="CHEBI:57766"/>
        <dbReference type="ChEBI" id="CHEBI:58278"/>
        <dbReference type="EC" id="4.2.1.19"/>
    </reaction>
</comment>
<comment type="pathway">
    <text evidence="1">Amino-acid biosynthesis; L-histidine biosynthesis; L-histidine from 5-phospho-alpha-D-ribose 1-diphosphate: step 6/9.</text>
</comment>
<comment type="subcellular location">
    <subcellularLocation>
        <location evidence="1">Cytoplasm</location>
    </subcellularLocation>
</comment>
<comment type="similarity">
    <text evidence="1">Belongs to the imidazoleglycerol-phosphate dehydratase family.</text>
</comment>
<sequence length="210" mass="23269">MNDSLLSNGHAPPLRQATVDRQTKETKVHVELTLDGNGLADNHTGIPFLNHMLDQLCAHGLVDLRVQASGDTHIDDHHTNEDVGITLGMALDQALGDRRGIQRFGHFVAPLDESLVEVALDFSGRPHLNYGLQIPTQRVGTYDTQLVREFFVALVNHSRMTLHIRQLDGMNSHHIIEATFKAFARALRMAIALDPRRAQQIPSSKGVIQA</sequence>
<evidence type="ECO:0000255" key="1">
    <source>
        <dbReference type="HAMAP-Rule" id="MF_00076"/>
    </source>
</evidence>
<evidence type="ECO:0000256" key="2">
    <source>
        <dbReference type="SAM" id="MobiDB-lite"/>
    </source>
</evidence>